<evidence type="ECO:0000255" key="1">
    <source>
        <dbReference type="HAMAP-Rule" id="MF_00208"/>
    </source>
</evidence>
<protein>
    <recommendedName>
        <fullName evidence="1">UDP-N-acetylmuramoyl-L-alanyl-D-glutamate--2,6-diaminopimelate ligase</fullName>
        <ecNumber evidence="1">6.3.2.13</ecNumber>
    </recommendedName>
    <alternativeName>
        <fullName evidence="1">Meso-A2pm-adding enzyme</fullName>
    </alternativeName>
    <alternativeName>
        <fullName evidence="1">Meso-diaminopimelate-adding enzyme</fullName>
    </alternativeName>
    <alternativeName>
        <fullName evidence="1">UDP-MurNAc-L-Ala-D-Glu:meso-diaminopimelate ligase</fullName>
    </alternativeName>
    <alternativeName>
        <fullName evidence="1">UDP-MurNAc-tripeptide synthetase</fullName>
    </alternativeName>
    <alternativeName>
        <fullName evidence="1">UDP-N-acetylmuramyl-tripeptide synthetase</fullName>
    </alternativeName>
</protein>
<feature type="chain" id="PRO_0000101972" description="UDP-N-acetylmuramoyl-L-alanyl-D-glutamate--2,6-diaminopimelate ligase">
    <location>
        <begin position="1"/>
        <end position="434"/>
    </location>
</feature>
<feature type="short sequence motif" description="Meso-diaminopimelate recognition motif">
    <location>
        <begin position="350"/>
        <end position="353"/>
    </location>
</feature>
<feature type="binding site" evidence="1">
    <location>
        <position position="17"/>
    </location>
    <ligand>
        <name>UDP-N-acetyl-alpha-D-muramoyl-L-alanyl-D-glutamate</name>
        <dbReference type="ChEBI" id="CHEBI:83900"/>
    </ligand>
</feature>
<feature type="binding site" evidence="1">
    <location>
        <begin position="68"/>
        <end position="74"/>
    </location>
    <ligand>
        <name>ATP</name>
        <dbReference type="ChEBI" id="CHEBI:30616"/>
    </ligand>
</feature>
<feature type="binding site" evidence="1">
    <location>
        <begin position="111"/>
        <end position="112"/>
    </location>
    <ligand>
        <name>UDP-N-acetyl-alpha-D-muramoyl-L-alanyl-D-glutamate</name>
        <dbReference type="ChEBI" id="CHEBI:83900"/>
    </ligand>
</feature>
<feature type="binding site" evidence="1">
    <location>
        <position position="138"/>
    </location>
    <ligand>
        <name>UDP-N-acetyl-alpha-D-muramoyl-L-alanyl-D-glutamate</name>
        <dbReference type="ChEBI" id="CHEBI:83900"/>
    </ligand>
</feature>
<feature type="binding site" evidence="1">
    <location>
        <position position="144"/>
    </location>
    <ligand>
        <name>UDP-N-acetyl-alpha-D-muramoyl-L-alanyl-D-glutamate</name>
        <dbReference type="ChEBI" id="CHEBI:83900"/>
    </ligand>
</feature>
<feature type="binding site" evidence="1">
    <location>
        <position position="146"/>
    </location>
    <ligand>
        <name>UDP-N-acetyl-alpha-D-muramoyl-L-alanyl-D-glutamate</name>
        <dbReference type="ChEBI" id="CHEBI:83900"/>
    </ligand>
</feature>
<feature type="binding site" evidence="1">
    <location>
        <position position="326"/>
    </location>
    <ligand>
        <name>meso-2,6-diaminopimelate</name>
        <dbReference type="ChEBI" id="CHEBI:57791"/>
    </ligand>
</feature>
<feature type="binding site" evidence="1">
    <location>
        <begin position="350"/>
        <end position="353"/>
    </location>
    <ligand>
        <name>meso-2,6-diaminopimelate</name>
        <dbReference type="ChEBI" id="CHEBI:57791"/>
    </ligand>
</feature>
<feature type="binding site" evidence="1">
    <location>
        <position position="401"/>
    </location>
    <ligand>
        <name>meso-2,6-diaminopimelate</name>
        <dbReference type="ChEBI" id="CHEBI:57791"/>
    </ligand>
</feature>
<feature type="binding site" evidence="1">
    <location>
        <position position="405"/>
    </location>
    <ligand>
        <name>meso-2,6-diaminopimelate</name>
        <dbReference type="ChEBI" id="CHEBI:57791"/>
    </ligand>
</feature>
<feature type="modified residue" description="N6-carboxylysine" evidence="1">
    <location>
        <position position="178"/>
    </location>
</feature>
<keyword id="KW-0067">ATP-binding</keyword>
<keyword id="KW-0131">Cell cycle</keyword>
<keyword id="KW-0132">Cell division</keyword>
<keyword id="KW-0133">Cell shape</keyword>
<keyword id="KW-0961">Cell wall biogenesis/degradation</keyword>
<keyword id="KW-0963">Cytoplasm</keyword>
<keyword id="KW-0436">Ligase</keyword>
<keyword id="KW-0460">Magnesium</keyword>
<keyword id="KW-0547">Nucleotide-binding</keyword>
<keyword id="KW-0573">Peptidoglycan synthesis</keyword>
<keyword id="KW-1185">Reference proteome</keyword>
<comment type="function">
    <text evidence="1">Catalyzes the addition of meso-diaminopimelic acid to the nucleotide precursor UDP-N-acetylmuramoyl-L-alanyl-D-glutamate (UMAG) in the biosynthesis of bacterial cell-wall peptidoglycan.</text>
</comment>
<comment type="catalytic activity">
    <reaction evidence="1">
        <text>UDP-N-acetyl-alpha-D-muramoyl-L-alanyl-D-glutamate + meso-2,6-diaminopimelate + ATP = UDP-N-acetyl-alpha-D-muramoyl-L-alanyl-gamma-D-glutamyl-meso-2,6-diaminopimelate + ADP + phosphate + H(+)</text>
        <dbReference type="Rhea" id="RHEA:23676"/>
        <dbReference type="ChEBI" id="CHEBI:15378"/>
        <dbReference type="ChEBI" id="CHEBI:30616"/>
        <dbReference type="ChEBI" id="CHEBI:43474"/>
        <dbReference type="ChEBI" id="CHEBI:57791"/>
        <dbReference type="ChEBI" id="CHEBI:83900"/>
        <dbReference type="ChEBI" id="CHEBI:83905"/>
        <dbReference type="ChEBI" id="CHEBI:456216"/>
        <dbReference type="EC" id="6.3.2.13"/>
    </reaction>
</comment>
<comment type="cofactor">
    <cofactor evidence="1">
        <name>Mg(2+)</name>
        <dbReference type="ChEBI" id="CHEBI:18420"/>
    </cofactor>
</comment>
<comment type="pathway">
    <text evidence="1">Cell wall biogenesis; peptidoglycan biosynthesis.</text>
</comment>
<comment type="subcellular location">
    <subcellularLocation>
        <location evidence="1">Cytoplasm</location>
    </subcellularLocation>
</comment>
<comment type="PTM">
    <text evidence="1">Carboxylation is probably crucial for Mg(2+) binding and, consequently, for the gamma-phosphate positioning of ATP.</text>
</comment>
<comment type="similarity">
    <text evidence="1">Belongs to the MurCDEF family. MurE subfamily.</text>
</comment>
<name>MURE_WOLSU</name>
<organism>
    <name type="scientific">Wolinella succinogenes (strain ATCC 29543 / DSM 1740 / CCUG 13145 / JCM 31913 / LMG 7466 / NCTC 11488 / FDC 602W)</name>
    <name type="common">Vibrio succinogenes</name>
    <dbReference type="NCBI Taxonomy" id="273121"/>
    <lineage>
        <taxon>Bacteria</taxon>
        <taxon>Pseudomonadati</taxon>
        <taxon>Campylobacterota</taxon>
        <taxon>Epsilonproteobacteria</taxon>
        <taxon>Campylobacterales</taxon>
        <taxon>Helicobacteraceae</taxon>
        <taxon>Wolinella</taxon>
    </lineage>
</organism>
<gene>
    <name evidence="1" type="primary">murE</name>
    <name type="ordered locus">WS1688</name>
</gene>
<reference key="1">
    <citation type="journal article" date="2003" name="Proc. Natl. Acad. Sci. U.S.A.">
        <title>Complete genome sequence and analysis of Wolinella succinogenes.</title>
        <authorList>
            <person name="Baar C."/>
            <person name="Eppinger M."/>
            <person name="Raddatz G."/>
            <person name="Simon J."/>
            <person name="Lanz C."/>
            <person name="Klimmek O."/>
            <person name="Nandakumar R."/>
            <person name="Gross R."/>
            <person name="Rosinus A."/>
            <person name="Keller H."/>
            <person name="Jagtap P."/>
            <person name="Linke B."/>
            <person name="Meyer F."/>
            <person name="Lederer H."/>
            <person name="Schuster S.C."/>
        </authorList>
    </citation>
    <scope>NUCLEOTIDE SEQUENCE [LARGE SCALE GENOMIC DNA]</scope>
    <source>
        <strain>ATCC 29543 / DSM 1740 / CCUG 13145 / JCM 31913 / LMG 7466 / NCTC 11488 / FDC 602W</strain>
    </source>
</reference>
<sequence>MKVFSHQDEVEFISDDSRECTPKSAFLLTQSSRVYEAAAREKGCKLFLEPKDLHRFLKTDIPLIGVTGTNGKTTTSAAIYSILLDLGYKVALLGTRGFFMNDELIEPKGLTTPPLLELYERIDRAKRAGCDFFVMEVSSHAIDQKRIEGLNFALKILTNITSDHLDYHKSLEHYIQTKNSFFDDSTPKLINKDESKAKFNLQNALSYGIEHPSSYHVKAYSLHGGIEARIAFLEKEASLSSSLFGKHNLYNLLAAVSAVHRLIGGELQEICDMAERFGGVEGRMERVSEEPLVVVDFAHTEDGMRQIFESFPHQEIVVLFGAGGDRDRSKRPKMGAVADRYAKRIYLTSDNPRSEDPLLIIEEIEKGIHHCQKCVKEPDRVQAIRRAVKELEAQEVLLILGKGDEAEQIIGSQKIPMKDRETVLSALGEIRGVR</sequence>
<accession>Q7M8F9</accession>
<dbReference type="EC" id="6.3.2.13" evidence="1"/>
<dbReference type="EMBL" id="BX571661">
    <property type="protein sequence ID" value="CAE10715.1"/>
    <property type="molecule type" value="Genomic_DNA"/>
</dbReference>
<dbReference type="RefSeq" id="WP_011139499.1">
    <property type="nucleotide sequence ID" value="NC_005090.1"/>
</dbReference>
<dbReference type="SMR" id="Q7M8F9"/>
<dbReference type="STRING" id="273121.WS1688"/>
<dbReference type="KEGG" id="wsu:WS1688"/>
<dbReference type="eggNOG" id="COG0769">
    <property type="taxonomic scope" value="Bacteria"/>
</dbReference>
<dbReference type="HOGENOM" id="CLU_022291_2_0_7"/>
<dbReference type="UniPathway" id="UPA00219"/>
<dbReference type="Proteomes" id="UP000000422">
    <property type="component" value="Chromosome"/>
</dbReference>
<dbReference type="GO" id="GO:0005737">
    <property type="term" value="C:cytoplasm"/>
    <property type="evidence" value="ECO:0007669"/>
    <property type="project" value="UniProtKB-SubCell"/>
</dbReference>
<dbReference type="GO" id="GO:0005524">
    <property type="term" value="F:ATP binding"/>
    <property type="evidence" value="ECO:0007669"/>
    <property type="project" value="UniProtKB-UniRule"/>
</dbReference>
<dbReference type="GO" id="GO:0000287">
    <property type="term" value="F:magnesium ion binding"/>
    <property type="evidence" value="ECO:0007669"/>
    <property type="project" value="UniProtKB-UniRule"/>
</dbReference>
<dbReference type="GO" id="GO:0004326">
    <property type="term" value="F:tetrahydrofolylpolyglutamate synthase activity"/>
    <property type="evidence" value="ECO:0007669"/>
    <property type="project" value="InterPro"/>
</dbReference>
<dbReference type="GO" id="GO:0008765">
    <property type="term" value="F:UDP-N-acetylmuramoylalanyl-D-glutamate-2,6-diaminopimelate ligase activity"/>
    <property type="evidence" value="ECO:0007669"/>
    <property type="project" value="UniProtKB-UniRule"/>
</dbReference>
<dbReference type="GO" id="GO:0051301">
    <property type="term" value="P:cell division"/>
    <property type="evidence" value="ECO:0007669"/>
    <property type="project" value="UniProtKB-KW"/>
</dbReference>
<dbReference type="GO" id="GO:0071555">
    <property type="term" value="P:cell wall organization"/>
    <property type="evidence" value="ECO:0007669"/>
    <property type="project" value="UniProtKB-KW"/>
</dbReference>
<dbReference type="GO" id="GO:0009252">
    <property type="term" value="P:peptidoglycan biosynthetic process"/>
    <property type="evidence" value="ECO:0007669"/>
    <property type="project" value="UniProtKB-UniRule"/>
</dbReference>
<dbReference type="GO" id="GO:0008360">
    <property type="term" value="P:regulation of cell shape"/>
    <property type="evidence" value="ECO:0007669"/>
    <property type="project" value="UniProtKB-KW"/>
</dbReference>
<dbReference type="CDD" id="cd01983">
    <property type="entry name" value="SIMIBI"/>
    <property type="match status" value="1"/>
</dbReference>
<dbReference type="Gene3D" id="3.90.190.20">
    <property type="entry name" value="Mur ligase, C-terminal domain"/>
    <property type="match status" value="1"/>
</dbReference>
<dbReference type="Gene3D" id="3.40.1190.10">
    <property type="entry name" value="Mur-like, catalytic domain"/>
    <property type="match status" value="1"/>
</dbReference>
<dbReference type="HAMAP" id="MF_00208">
    <property type="entry name" value="MurE"/>
    <property type="match status" value="1"/>
</dbReference>
<dbReference type="InterPro" id="IPR018109">
    <property type="entry name" value="Folylpolyglutamate_synth_CS"/>
</dbReference>
<dbReference type="InterPro" id="IPR036565">
    <property type="entry name" value="Mur-like_cat_sf"/>
</dbReference>
<dbReference type="InterPro" id="IPR004101">
    <property type="entry name" value="Mur_ligase_C"/>
</dbReference>
<dbReference type="InterPro" id="IPR036615">
    <property type="entry name" value="Mur_ligase_C_dom_sf"/>
</dbReference>
<dbReference type="InterPro" id="IPR013221">
    <property type="entry name" value="Mur_ligase_cen"/>
</dbReference>
<dbReference type="InterPro" id="IPR005761">
    <property type="entry name" value="UDP-N-AcMur-Glu-dNH2Pim_ligase"/>
</dbReference>
<dbReference type="NCBIfam" id="TIGR01085">
    <property type="entry name" value="murE"/>
    <property type="match status" value="1"/>
</dbReference>
<dbReference type="NCBIfam" id="NF001126">
    <property type="entry name" value="PRK00139.1-4"/>
    <property type="match status" value="1"/>
</dbReference>
<dbReference type="PANTHER" id="PTHR23135">
    <property type="entry name" value="MUR LIGASE FAMILY MEMBER"/>
    <property type="match status" value="1"/>
</dbReference>
<dbReference type="PANTHER" id="PTHR23135:SF4">
    <property type="entry name" value="UDP-N-ACETYLMURAMOYL-L-ALANYL-D-GLUTAMATE--2,6-DIAMINOPIMELATE LIGASE MURE HOMOLOG, CHLOROPLASTIC"/>
    <property type="match status" value="1"/>
</dbReference>
<dbReference type="Pfam" id="PF02875">
    <property type="entry name" value="Mur_ligase_C"/>
    <property type="match status" value="1"/>
</dbReference>
<dbReference type="Pfam" id="PF08245">
    <property type="entry name" value="Mur_ligase_M"/>
    <property type="match status" value="1"/>
</dbReference>
<dbReference type="SUPFAM" id="SSF53623">
    <property type="entry name" value="MurD-like peptide ligases, catalytic domain"/>
    <property type="match status" value="1"/>
</dbReference>
<dbReference type="SUPFAM" id="SSF53244">
    <property type="entry name" value="MurD-like peptide ligases, peptide-binding domain"/>
    <property type="match status" value="1"/>
</dbReference>
<proteinExistence type="inferred from homology"/>